<feature type="chain" id="PRO_1000127308" description="Large ribosomal subunit protein bL35">
    <location>
        <begin position="1"/>
        <end position="66"/>
    </location>
</feature>
<feature type="region of interest" description="Disordered" evidence="2">
    <location>
        <begin position="1"/>
        <end position="26"/>
    </location>
</feature>
<proteinExistence type="inferred from homology"/>
<keyword id="KW-0687">Ribonucleoprotein</keyword>
<keyword id="KW-0689">Ribosomal protein</keyword>
<sequence length="66" mass="7496">MPKQKTHRGAAKRFKKTGSGKLKRSHAYTSHLFANKSTKAKRKLRKAGVVSAGDFKRIRQMLDNLK</sequence>
<gene>
    <name evidence="1" type="primary">rpmI</name>
    <name type="ordered locus">BcerKBAB4_4405</name>
</gene>
<reference key="1">
    <citation type="journal article" date="2008" name="Chem. Biol. Interact.">
        <title>Extending the Bacillus cereus group genomics to putative food-borne pathogens of different toxicity.</title>
        <authorList>
            <person name="Lapidus A."/>
            <person name="Goltsman E."/>
            <person name="Auger S."/>
            <person name="Galleron N."/>
            <person name="Segurens B."/>
            <person name="Dossat C."/>
            <person name="Land M.L."/>
            <person name="Broussolle V."/>
            <person name="Brillard J."/>
            <person name="Guinebretiere M.-H."/>
            <person name="Sanchis V."/>
            <person name="Nguen-the C."/>
            <person name="Lereclus D."/>
            <person name="Richardson P."/>
            <person name="Wincker P."/>
            <person name="Weissenbach J."/>
            <person name="Ehrlich S.D."/>
            <person name="Sorokin A."/>
        </authorList>
    </citation>
    <scope>NUCLEOTIDE SEQUENCE [LARGE SCALE GENOMIC DNA]</scope>
    <source>
        <strain>KBAB4</strain>
    </source>
</reference>
<dbReference type="EMBL" id="CP000903">
    <property type="protein sequence ID" value="ABY45564.1"/>
    <property type="molecule type" value="Genomic_DNA"/>
</dbReference>
<dbReference type="RefSeq" id="WP_001125945.1">
    <property type="nucleotide sequence ID" value="NZ_CAKMRX030000126.1"/>
</dbReference>
<dbReference type="SMR" id="A9VJN7"/>
<dbReference type="GeneID" id="93006536"/>
<dbReference type="KEGG" id="bwe:BcerKBAB4_4405"/>
<dbReference type="eggNOG" id="COG0291">
    <property type="taxonomic scope" value="Bacteria"/>
</dbReference>
<dbReference type="HOGENOM" id="CLU_169643_3_0_9"/>
<dbReference type="Proteomes" id="UP000002154">
    <property type="component" value="Chromosome"/>
</dbReference>
<dbReference type="GO" id="GO:0022625">
    <property type="term" value="C:cytosolic large ribosomal subunit"/>
    <property type="evidence" value="ECO:0007669"/>
    <property type="project" value="TreeGrafter"/>
</dbReference>
<dbReference type="GO" id="GO:0003735">
    <property type="term" value="F:structural constituent of ribosome"/>
    <property type="evidence" value="ECO:0007669"/>
    <property type="project" value="InterPro"/>
</dbReference>
<dbReference type="GO" id="GO:0006412">
    <property type="term" value="P:translation"/>
    <property type="evidence" value="ECO:0007669"/>
    <property type="project" value="UniProtKB-UniRule"/>
</dbReference>
<dbReference type="FunFam" id="4.10.410.60:FF:000001">
    <property type="entry name" value="50S ribosomal protein L35"/>
    <property type="match status" value="1"/>
</dbReference>
<dbReference type="Gene3D" id="4.10.410.60">
    <property type="match status" value="1"/>
</dbReference>
<dbReference type="HAMAP" id="MF_00514">
    <property type="entry name" value="Ribosomal_bL35"/>
    <property type="match status" value="1"/>
</dbReference>
<dbReference type="InterPro" id="IPR001706">
    <property type="entry name" value="Ribosomal_bL35"/>
</dbReference>
<dbReference type="InterPro" id="IPR021137">
    <property type="entry name" value="Ribosomal_bL35-like"/>
</dbReference>
<dbReference type="InterPro" id="IPR018265">
    <property type="entry name" value="Ribosomal_bL35_CS"/>
</dbReference>
<dbReference type="InterPro" id="IPR037229">
    <property type="entry name" value="Ribosomal_bL35_sf"/>
</dbReference>
<dbReference type="NCBIfam" id="TIGR00001">
    <property type="entry name" value="rpmI_bact"/>
    <property type="match status" value="1"/>
</dbReference>
<dbReference type="PANTHER" id="PTHR33343">
    <property type="entry name" value="54S RIBOSOMAL PROTEIN BL35M"/>
    <property type="match status" value="1"/>
</dbReference>
<dbReference type="PANTHER" id="PTHR33343:SF1">
    <property type="entry name" value="LARGE RIBOSOMAL SUBUNIT PROTEIN BL35M"/>
    <property type="match status" value="1"/>
</dbReference>
<dbReference type="Pfam" id="PF01632">
    <property type="entry name" value="Ribosomal_L35p"/>
    <property type="match status" value="1"/>
</dbReference>
<dbReference type="PRINTS" id="PR00064">
    <property type="entry name" value="RIBOSOMALL35"/>
</dbReference>
<dbReference type="SUPFAM" id="SSF143034">
    <property type="entry name" value="L35p-like"/>
    <property type="match status" value="1"/>
</dbReference>
<dbReference type="PROSITE" id="PS00936">
    <property type="entry name" value="RIBOSOMAL_L35"/>
    <property type="match status" value="1"/>
</dbReference>
<evidence type="ECO:0000255" key="1">
    <source>
        <dbReference type="HAMAP-Rule" id="MF_00514"/>
    </source>
</evidence>
<evidence type="ECO:0000256" key="2">
    <source>
        <dbReference type="SAM" id="MobiDB-lite"/>
    </source>
</evidence>
<evidence type="ECO:0000305" key="3"/>
<name>RL35_BACMK</name>
<organism>
    <name type="scientific">Bacillus mycoides (strain KBAB4)</name>
    <name type="common">Bacillus weihenstephanensis</name>
    <dbReference type="NCBI Taxonomy" id="315730"/>
    <lineage>
        <taxon>Bacteria</taxon>
        <taxon>Bacillati</taxon>
        <taxon>Bacillota</taxon>
        <taxon>Bacilli</taxon>
        <taxon>Bacillales</taxon>
        <taxon>Bacillaceae</taxon>
        <taxon>Bacillus</taxon>
        <taxon>Bacillus cereus group</taxon>
    </lineage>
</organism>
<protein>
    <recommendedName>
        <fullName evidence="1">Large ribosomal subunit protein bL35</fullName>
    </recommendedName>
    <alternativeName>
        <fullName evidence="3">50S ribosomal protein L35</fullName>
    </alternativeName>
</protein>
<comment type="similarity">
    <text evidence="1">Belongs to the bacterial ribosomal protein bL35 family.</text>
</comment>
<accession>A9VJN7</accession>